<reference key="1">
    <citation type="submission" date="2004-11" db="EMBL/GenBank/DDBJ databases">
        <authorList>
            <consortium name="The German cDNA consortium"/>
        </authorList>
    </citation>
    <scope>NUCLEOTIDE SEQUENCE [LARGE SCALE MRNA]</scope>
    <source>
        <tissue>Kidney</tissue>
    </source>
</reference>
<dbReference type="EMBL" id="CR859825">
    <property type="protein sequence ID" value="CAH91982.1"/>
    <property type="molecule type" value="mRNA"/>
</dbReference>
<dbReference type="RefSeq" id="NP_001126150.1">
    <property type="nucleotide sequence ID" value="NM_001132678.1"/>
</dbReference>
<dbReference type="SMR" id="Q5R8C8"/>
<dbReference type="STRING" id="9601.ENSPPYP00000021074"/>
<dbReference type="GeneID" id="100173109"/>
<dbReference type="KEGG" id="pon:100173109"/>
<dbReference type="CTD" id="157567"/>
<dbReference type="eggNOG" id="KOG0508">
    <property type="taxonomic scope" value="Eukaryota"/>
</dbReference>
<dbReference type="InParanoid" id="Q5R8C8"/>
<dbReference type="OrthoDB" id="21416at2759"/>
<dbReference type="Proteomes" id="UP000001595">
    <property type="component" value="Unplaced"/>
</dbReference>
<dbReference type="GO" id="GO:0016020">
    <property type="term" value="C:membrane"/>
    <property type="evidence" value="ECO:0007669"/>
    <property type="project" value="UniProtKB-SubCell"/>
</dbReference>
<dbReference type="Gene3D" id="1.25.40.20">
    <property type="entry name" value="Ankyrin repeat-containing domain"/>
    <property type="match status" value="1"/>
</dbReference>
<dbReference type="InterPro" id="IPR002110">
    <property type="entry name" value="Ankyrin_rpt"/>
</dbReference>
<dbReference type="InterPro" id="IPR036770">
    <property type="entry name" value="Ankyrin_rpt-contain_sf"/>
</dbReference>
<dbReference type="PANTHER" id="PTHR24171:SF9">
    <property type="entry name" value="ANKYRIN REPEAT DOMAIN-CONTAINING PROTEIN 39"/>
    <property type="match status" value="1"/>
</dbReference>
<dbReference type="PANTHER" id="PTHR24171">
    <property type="entry name" value="ANKYRIN REPEAT DOMAIN-CONTAINING PROTEIN 39-RELATED"/>
    <property type="match status" value="1"/>
</dbReference>
<dbReference type="Pfam" id="PF12796">
    <property type="entry name" value="Ank_2"/>
    <property type="match status" value="1"/>
</dbReference>
<dbReference type="SMART" id="SM00248">
    <property type="entry name" value="ANK"/>
    <property type="match status" value="3"/>
</dbReference>
<dbReference type="SUPFAM" id="SSF48403">
    <property type="entry name" value="Ankyrin repeat"/>
    <property type="match status" value="1"/>
</dbReference>
<dbReference type="PROSITE" id="PS50297">
    <property type="entry name" value="ANK_REP_REGION"/>
    <property type="match status" value="1"/>
</dbReference>
<dbReference type="PROSITE" id="PS50088">
    <property type="entry name" value="ANK_REPEAT"/>
    <property type="match status" value="2"/>
</dbReference>
<proteinExistence type="evidence at transcript level"/>
<accession>Q5R8C8</accession>
<sequence length="228" mass="25390">MSYVFVNDSSQTNVPLLQACIDGDFNYSKRLLESGFDPNIRDSRGRTGLHLAAARGNVDICQLLHKFGADLLATDYQGNTALHLCGHVDTIQFLVSNGLKIDICNHQGATPLVLAKRRGVNKDVIRLLEFLEEQEVKGFNRGTHSKLETMQTAESESAMESHSLLNPNLQQGEGVLSSFRTTWQEFVEDLGFWRVLLLIFVIALLSLGIAYYVSGVLPFVENQPELVH</sequence>
<name>ANR46_PONAB</name>
<comment type="subcellular location">
    <subcellularLocation>
        <location evidence="2">Membrane</location>
        <topology evidence="2">Single-pass membrane protein</topology>
    </subcellularLocation>
</comment>
<keyword id="KW-0040">ANK repeat</keyword>
<keyword id="KW-0472">Membrane</keyword>
<keyword id="KW-1185">Reference proteome</keyword>
<keyword id="KW-0677">Repeat</keyword>
<keyword id="KW-0812">Transmembrane</keyword>
<keyword id="KW-1133">Transmembrane helix</keyword>
<evidence type="ECO:0000255" key="1"/>
<evidence type="ECO:0000305" key="2"/>
<feature type="chain" id="PRO_0000244579" description="Ankyrin repeat domain-containing protein 46">
    <location>
        <begin position="1"/>
        <end position="228"/>
    </location>
</feature>
<feature type="transmembrane region" description="Helical" evidence="1">
    <location>
        <begin position="195"/>
        <end position="215"/>
    </location>
</feature>
<feature type="repeat" description="ANK 1">
    <location>
        <begin position="11"/>
        <end position="40"/>
    </location>
</feature>
<feature type="repeat" description="ANK 2">
    <location>
        <begin position="44"/>
        <end position="73"/>
    </location>
</feature>
<feature type="repeat" description="ANK 3">
    <location>
        <begin position="77"/>
        <end position="103"/>
    </location>
</feature>
<feature type="repeat" description="ANK 4">
    <location>
        <begin position="107"/>
        <end position="138"/>
    </location>
</feature>
<organism>
    <name type="scientific">Pongo abelii</name>
    <name type="common">Sumatran orangutan</name>
    <name type="synonym">Pongo pygmaeus abelii</name>
    <dbReference type="NCBI Taxonomy" id="9601"/>
    <lineage>
        <taxon>Eukaryota</taxon>
        <taxon>Metazoa</taxon>
        <taxon>Chordata</taxon>
        <taxon>Craniata</taxon>
        <taxon>Vertebrata</taxon>
        <taxon>Euteleostomi</taxon>
        <taxon>Mammalia</taxon>
        <taxon>Eutheria</taxon>
        <taxon>Euarchontoglires</taxon>
        <taxon>Primates</taxon>
        <taxon>Haplorrhini</taxon>
        <taxon>Catarrhini</taxon>
        <taxon>Hominidae</taxon>
        <taxon>Pongo</taxon>
    </lineage>
</organism>
<protein>
    <recommendedName>
        <fullName>Ankyrin repeat domain-containing protein 46</fullName>
    </recommendedName>
</protein>
<gene>
    <name type="primary">ANKRD46</name>
</gene>